<reference key="1">
    <citation type="journal article" date="2007" name="Proc. Natl. Acad. Sci. U.S.A.">
        <title>Genome and proteome of long-chain alkane degrading Geobacillus thermodenitrificans NG80-2 isolated from a deep-subsurface oil reservoir.</title>
        <authorList>
            <person name="Feng L."/>
            <person name="Wang W."/>
            <person name="Cheng J."/>
            <person name="Ren Y."/>
            <person name="Zhao G."/>
            <person name="Gao C."/>
            <person name="Tang Y."/>
            <person name="Liu X."/>
            <person name="Han W."/>
            <person name="Peng X."/>
            <person name="Liu R."/>
            <person name="Wang L."/>
        </authorList>
    </citation>
    <scope>NUCLEOTIDE SEQUENCE [LARGE SCALE GENOMIC DNA]</scope>
    <source>
        <strain>NG80-2</strain>
    </source>
</reference>
<evidence type="ECO:0000255" key="1">
    <source>
        <dbReference type="HAMAP-Rule" id="MF_00719"/>
    </source>
</evidence>
<proteinExistence type="inferred from homology"/>
<keyword id="KW-1003">Cell membrane</keyword>
<keyword id="KW-0169">Cobalamin biosynthesis</keyword>
<keyword id="KW-0460">Magnesium</keyword>
<keyword id="KW-0472">Membrane</keyword>
<keyword id="KW-0808">Transferase</keyword>
<keyword id="KW-0812">Transmembrane</keyword>
<keyword id="KW-1133">Transmembrane helix</keyword>
<name>COBS_GEOTN</name>
<gene>
    <name evidence="1" type="primary">cobS</name>
    <name type="ordered locus">GTNG_2193</name>
</gene>
<sequence length="262" mass="28575">MRQMWNGWLLALQLFTVIPIRRSIEWNDIHVRWLVRSMPLAGAAIGALAAGTYALCSMFSFGTPLFLALFLLWLGIWLAGGLHADGWMDVSDAFFSYRDAKRRQQIMSDSRVGAFAVLSLACLLSFRWLFLYETIKAEIPPALFVAIPLLSRSGAAWLLSVGKLAKSTGMAASVREYISWRDAVWALVLAFLALSLLLVFGGVPVWTSAALAVAMALLALGAKPWVEKQFGGVTGDVLGALIEGGETLLWGVVWLLHSSAMG</sequence>
<dbReference type="EC" id="2.7.8.26" evidence="1"/>
<dbReference type="EMBL" id="CP000557">
    <property type="protein sequence ID" value="ABO67542.1"/>
    <property type="molecule type" value="Genomic_DNA"/>
</dbReference>
<dbReference type="RefSeq" id="WP_008879673.1">
    <property type="nucleotide sequence ID" value="NC_009328.1"/>
</dbReference>
<dbReference type="KEGG" id="gtn:GTNG_2193"/>
<dbReference type="eggNOG" id="COG0368">
    <property type="taxonomic scope" value="Bacteria"/>
</dbReference>
<dbReference type="HOGENOM" id="CLU_057426_3_1_9"/>
<dbReference type="UniPathway" id="UPA00148">
    <property type="reaction ID" value="UER00238"/>
</dbReference>
<dbReference type="Proteomes" id="UP000001578">
    <property type="component" value="Chromosome"/>
</dbReference>
<dbReference type="GO" id="GO:0005886">
    <property type="term" value="C:plasma membrane"/>
    <property type="evidence" value="ECO:0007669"/>
    <property type="project" value="UniProtKB-SubCell"/>
</dbReference>
<dbReference type="GO" id="GO:0051073">
    <property type="term" value="F:adenosylcobinamide-GDP ribazoletransferase activity"/>
    <property type="evidence" value="ECO:0007669"/>
    <property type="project" value="UniProtKB-UniRule"/>
</dbReference>
<dbReference type="GO" id="GO:0008818">
    <property type="term" value="F:cobalamin 5'-phosphate synthase activity"/>
    <property type="evidence" value="ECO:0007669"/>
    <property type="project" value="UniProtKB-UniRule"/>
</dbReference>
<dbReference type="GO" id="GO:0009236">
    <property type="term" value="P:cobalamin biosynthetic process"/>
    <property type="evidence" value="ECO:0007669"/>
    <property type="project" value="UniProtKB-UniRule"/>
</dbReference>
<dbReference type="HAMAP" id="MF_00719">
    <property type="entry name" value="CobS"/>
    <property type="match status" value="1"/>
</dbReference>
<dbReference type="InterPro" id="IPR003805">
    <property type="entry name" value="CobS"/>
</dbReference>
<dbReference type="PANTHER" id="PTHR34148">
    <property type="entry name" value="ADENOSYLCOBINAMIDE-GDP RIBAZOLETRANSFERASE"/>
    <property type="match status" value="1"/>
</dbReference>
<dbReference type="PANTHER" id="PTHR34148:SF1">
    <property type="entry name" value="ADENOSYLCOBINAMIDE-GDP RIBAZOLETRANSFERASE"/>
    <property type="match status" value="1"/>
</dbReference>
<dbReference type="Pfam" id="PF02654">
    <property type="entry name" value="CobS"/>
    <property type="match status" value="1"/>
</dbReference>
<comment type="function">
    <text evidence="1">Joins adenosylcobinamide-GDP and alpha-ribazole to generate adenosylcobalamin (Ado-cobalamin). Also synthesizes adenosylcobalamin 5'-phosphate from adenosylcobinamide-GDP and alpha-ribazole 5'-phosphate.</text>
</comment>
<comment type="catalytic activity">
    <reaction evidence="1">
        <text>alpha-ribazole + adenosylcob(III)inamide-GDP = adenosylcob(III)alamin + GMP + H(+)</text>
        <dbReference type="Rhea" id="RHEA:16049"/>
        <dbReference type="ChEBI" id="CHEBI:10329"/>
        <dbReference type="ChEBI" id="CHEBI:15378"/>
        <dbReference type="ChEBI" id="CHEBI:18408"/>
        <dbReference type="ChEBI" id="CHEBI:58115"/>
        <dbReference type="ChEBI" id="CHEBI:60487"/>
        <dbReference type="EC" id="2.7.8.26"/>
    </reaction>
</comment>
<comment type="catalytic activity">
    <reaction evidence="1">
        <text>alpha-ribazole 5'-phosphate + adenosylcob(III)inamide-GDP = adenosylcob(III)alamin 5'-phosphate + GMP + H(+)</text>
        <dbReference type="Rhea" id="RHEA:23560"/>
        <dbReference type="ChEBI" id="CHEBI:15378"/>
        <dbReference type="ChEBI" id="CHEBI:57918"/>
        <dbReference type="ChEBI" id="CHEBI:58115"/>
        <dbReference type="ChEBI" id="CHEBI:60487"/>
        <dbReference type="ChEBI" id="CHEBI:60493"/>
        <dbReference type="EC" id="2.7.8.26"/>
    </reaction>
</comment>
<comment type="cofactor">
    <cofactor evidence="1">
        <name>Mg(2+)</name>
        <dbReference type="ChEBI" id="CHEBI:18420"/>
    </cofactor>
</comment>
<comment type="pathway">
    <text evidence="1">Cofactor biosynthesis; adenosylcobalamin biosynthesis; adenosylcobalamin from cob(II)yrinate a,c-diamide: step 7/7.</text>
</comment>
<comment type="subcellular location">
    <subcellularLocation>
        <location evidence="1">Cell membrane</location>
        <topology evidence="1">Multi-pass membrane protein</topology>
    </subcellularLocation>
</comment>
<comment type="similarity">
    <text evidence="1">Belongs to the CobS family.</text>
</comment>
<accession>A4IQD8</accession>
<organism>
    <name type="scientific">Geobacillus thermodenitrificans (strain NG80-2)</name>
    <dbReference type="NCBI Taxonomy" id="420246"/>
    <lineage>
        <taxon>Bacteria</taxon>
        <taxon>Bacillati</taxon>
        <taxon>Bacillota</taxon>
        <taxon>Bacilli</taxon>
        <taxon>Bacillales</taxon>
        <taxon>Anoxybacillaceae</taxon>
        <taxon>Geobacillus</taxon>
    </lineage>
</organism>
<protein>
    <recommendedName>
        <fullName evidence="1">Adenosylcobinamide-GDP ribazoletransferase</fullName>
        <ecNumber evidence="1">2.7.8.26</ecNumber>
    </recommendedName>
    <alternativeName>
        <fullName evidence="1">Cobalamin synthase</fullName>
    </alternativeName>
    <alternativeName>
        <fullName evidence="1">Cobalamin-5'-phosphate synthase</fullName>
    </alternativeName>
</protein>
<feature type="chain" id="PRO_1000045771" description="Adenosylcobinamide-GDP ribazoletransferase">
    <location>
        <begin position="1"/>
        <end position="262"/>
    </location>
</feature>
<feature type="transmembrane region" description="Helical" evidence="1">
    <location>
        <begin position="37"/>
        <end position="57"/>
    </location>
</feature>
<feature type="transmembrane region" description="Helical" evidence="1">
    <location>
        <begin position="58"/>
        <end position="78"/>
    </location>
</feature>
<feature type="transmembrane region" description="Helical" evidence="1">
    <location>
        <begin position="112"/>
        <end position="132"/>
    </location>
</feature>
<feature type="transmembrane region" description="Helical" evidence="1">
    <location>
        <begin position="139"/>
        <end position="159"/>
    </location>
</feature>
<feature type="transmembrane region" description="Helical" evidence="1">
    <location>
        <begin position="183"/>
        <end position="203"/>
    </location>
</feature>
<feature type="transmembrane region" description="Helical" evidence="1">
    <location>
        <begin position="205"/>
        <end position="225"/>
    </location>
</feature>
<feature type="transmembrane region" description="Helical" evidence="1">
    <location>
        <begin position="237"/>
        <end position="257"/>
    </location>
</feature>